<name>CLPX_YERPE</name>
<proteinExistence type="inferred from homology"/>
<comment type="function">
    <text evidence="1">ATP-dependent specificity component of the Clp protease. It directs the protease to specific substrates. Can perform chaperone functions in the absence of ClpP.</text>
</comment>
<comment type="subunit">
    <text evidence="1">Component of the ClpX-ClpP complex. Forms a hexameric ring that, in the presence of ATP, binds to fourteen ClpP subunits assembled into a disk-like structure with a central cavity, resembling the structure of eukaryotic proteasomes.</text>
</comment>
<comment type="similarity">
    <text evidence="1">Belongs to the ClpX chaperone family.</text>
</comment>
<gene>
    <name evidence="1" type="primary">clpX</name>
    <name type="ordered locus">YPO3156</name>
    <name type="ordered locus">y1028</name>
    <name type="ordered locus">YP_0775</name>
</gene>
<sequence length="423" mass="46033">MTDKRKDGSGKLLYCSFCGKSQHEVRKLIAGPSVYICDECVDLCNDIIREEIKEVSPHRDRSSLPTPHEIRHHLDDYVIGQEPAKKVLAVAVYNHYKRLRNGDTSNGIELGKSNILLIGPTGSGKTLLAETLARLLDVPFTMADATTLTEAGYVGEDVENIIQKLLQKCDYDVQKAQRGIVYIDEIDKISRKSDNPSITRDVSGEGVQQALLKLIEGTIAAVPPQGGRKHPQQEFLQVDTSKILFICGGAFAGLDKVIGQRINTGSGIGFGAVVKGQSEKATEGELLSQVEPEDLIKFGLIPEFIGRLPVVATLSELSEDALIQILKEPKNALTKQYQALFSLEGVELEFRDEALTAIAKKAMARKTGARGLRSIVEGALLDTMYDLPSMDSVEKVVVDESVIAGQSAPMLIYGQPEAQASGE</sequence>
<protein>
    <recommendedName>
        <fullName evidence="1">ATP-dependent Clp protease ATP-binding subunit ClpX</fullName>
    </recommendedName>
</protein>
<keyword id="KW-0067">ATP-binding</keyword>
<keyword id="KW-0143">Chaperone</keyword>
<keyword id="KW-0479">Metal-binding</keyword>
<keyword id="KW-0547">Nucleotide-binding</keyword>
<keyword id="KW-1185">Reference proteome</keyword>
<keyword id="KW-0862">Zinc</keyword>
<reference key="1">
    <citation type="journal article" date="2001" name="Nature">
        <title>Genome sequence of Yersinia pestis, the causative agent of plague.</title>
        <authorList>
            <person name="Parkhill J."/>
            <person name="Wren B.W."/>
            <person name="Thomson N.R."/>
            <person name="Titball R.W."/>
            <person name="Holden M.T.G."/>
            <person name="Prentice M.B."/>
            <person name="Sebaihia M."/>
            <person name="James K.D."/>
            <person name="Churcher C.M."/>
            <person name="Mungall K.L."/>
            <person name="Baker S."/>
            <person name="Basham D."/>
            <person name="Bentley S.D."/>
            <person name="Brooks K."/>
            <person name="Cerdeno-Tarraga A.-M."/>
            <person name="Chillingworth T."/>
            <person name="Cronin A."/>
            <person name="Davies R.M."/>
            <person name="Davis P."/>
            <person name="Dougan G."/>
            <person name="Feltwell T."/>
            <person name="Hamlin N."/>
            <person name="Holroyd S."/>
            <person name="Jagels K."/>
            <person name="Karlyshev A.V."/>
            <person name="Leather S."/>
            <person name="Moule S."/>
            <person name="Oyston P.C.F."/>
            <person name="Quail M.A."/>
            <person name="Rutherford K.M."/>
            <person name="Simmonds M."/>
            <person name="Skelton J."/>
            <person name="Stevens K."/>
            <person name="Whitehead S."/>
            <person name="Barrell B.G."/>
        </authorList>
    </citation>
    <scope>NUCLEOTIDE SEQUENCE [LARGE SCALE GENOMIC DNA]</scope>
    <source>
        <strain>CO-92 / Biovar Orientalis</strain>
    </source>
</reference>
<reference key="2">
    <citation type="journal article" date="2002" name="J. Bacteriol.">
        <title>Genome sequence of Yersinia pestis KIM.</title>
        <authorList>
            <person name="Deng W."/>
            <person name="Burland V."/>
            <person name="Plunkett G. III"/>
            <person name="Boutin A."/>
            <person name="Mayhew G.F."/>
            <person name="Liss P."/>
            <person name="Perna N.T."/>
            <person name="Rose D.J."/>
            <person name="Mau B."/>
            <person name="Zhou S."/>
            <person name="Schwartz D.C."/>
            <person name="Fetherston J.D."/>
            <person name="Lindler L.E."/>
            <person name="Brubaker R.R."/>
            <person name="Plano G.V."/>
            <person name="Straley S.C."/>
            <person name="McDonough K.A."/>
            <person name="Nilles M.L."/>
            <person name="Matson J.S."/>
            <person name="Blattner F.R."/>
            <person name="Perry R.D."/>
        </authorList>
    </citation>
    <scope>NUCLEOTIDE SEQUENCE [LARGE SCALE GENOMIC DNA]</scope>
    <source>
        <strain>KIM10+ / Biovar Mediaevalis</strain>
    </source>
</reference>
<reference key="3">
    <citation type="journal article" date="2004" name="DNA Res.">
        <title>Complete genome sequence of Yersinia pestis strain 91001, an isolate avirulent to humans.</title>
        <authorList>
            <person name="Song Y."/>
            <person name="Tong Z."/>
            <person name="Wang J."/>
            <person name="Wang L."/>
            <person name="Guo Z."/>
            <person name="Han Y."/>
            <person name="Zhang J."/>
            <person name="Pei D."/>
            <person name="Zhou D."/>
            <person name="Qin H."/>
            <person name="Pang X."/>
            <person name="Han Y."/>
            <person name="Zhai J."/>
            <person name="Li M."/>
            <person name="Cui B."/>
            <person name="Qi Z."/>
            <person name="Jin L."/>
            <person name="Dai R."/>
            <person name="Chen F."/>
            <person name="Li S."/>
            <person name="Ye C."/>
            <person name="Du Z."/>
            <person name="Lin W."/>
            <person name="Wang J."/>
            <person name="Yu J."/>
            <person name="Yang H."/>
            <person name="Wang J."/>
            <person name="Huang P."/>
            <person name="Yang R."/>
        </authorList>
    </citation>
    <scope>NUCLEOTIDE SEQUENCE [LARGE SCALE GENOMIC DNA]</scope>
    <source>
        <strain>91001 / Biovar Mediaevalis</strain>
    </source>
</reference>
<evidence type="ECO:0000255" key="1">
    <source>
        <dbReference type="HAMAP-Rule" id="MF_00175"/>
    </source>
</evidence>
<evidence type="ECO:0000255" key="2">
    <source>
        <dbReference type="PROSITE-ProRule" id="PRU01250"/>
    </source>
</evidence>
<dbReference type="EMBL" id="AL590842">
    <property type="protein sequence ID" value="CAL21751.1"/>
    <property type="molecule type" value="Genomic_DNA"/>
</dbReference>
<dbReference type="EMBL" id="AE009952">
    <property type="protein sequence ID" value="AAM84609.1"/>
    <property type="molecule type" value="Genomic_DNA"/>
</dbReference>
<dbReference type="EMBL" id="AE017042">
    <property type="protein sequence ID" value="AAS61040.1"/>
    <property type="molecule type" value="Genomic_DNA"/>
</dbReference>
<dbReference type="PIR" id="AD0383">
    <property type="entry name" value="AD0383"/>
</dbReference>
<dbReference type="RefSeq" id="WP_002208641.1">
    <property type="nucleotide sequence ID" value="NZ_WUCM01000043.1"/>
</dbReference>
<dbReference type="RefSeq" id="YP_002348061.1">
    <property type="nucleotide sequence ID" value="NC_003143.1"/>
</dbReference>
<dbReference type="SMR" id="Q8ZC66"/>
<dbReference type="STRING" id="214092.YPO3156"/>
<dbReference type="PaxDb" id="214092-YPO3156"/>
<dbReference type="DNASU" id="1145975"/>
<dbReference type="EnsemblBacteria" id="AAS61040">
    <property type="protein sequence ID" value="AAS61040"/>
    <property type="gene ID" value="YP_0775"/>
</dbReference>
<dbReference type="GeneID" id="96664466"/>
<dbReference type="KEGG" id="ype:YPO3156"/>
<dbReference type="KEGG" id="ypk:y1028"/>
<dbReference type="KEGG" id="ypm:YP_0775"/>
<dbReference type="PATRIC" id="fig|214092.21.peg.3613"/>
<dbReference type="eggNOG" id="COG1219">
    <property type="taxonomic scope" value="Bacteria"/>
</dbReference>
<dbReference type="HOGENOM" id="CLU_014218_8_2_6"/>
<dbReference type="OMA" id="LDTMFDL"/>
<dbReference type="OrthoDB" id="9804062at2"/>
<dbReference type="Proteomes" id="UP000000815">
    <property type="component" value="Chromosome"/>
</dbReference>
<dbReference type="Proteomes" id="UP000001019">
    <property type="component" value="Chromosome"/>
</dbReference>
<dbReference type="Proteomes" id="UP000002490">
    <property type="component" value="Chromosome"/>
</dbReference>
<dbReference type="GO" id="GO:0009376">
    <property type="term" value="C:HslUV protease complex"/>
    <property type="evidence" value="ECO:0000318"/>
    <property type="project" value="GO_Central"/>
</dbReference>
<dbReference type="GO" id="GO:0005524">
    <property type="term" value="F:ATP binding"/>
    <property type="evidence" value="ECO:0000318"/>
    <property type="project" value="GO_Central"/>
</dbReference>
<dbReference type="GO" id="GO:0016887">
    <property type="term" value="F:ATP hydrolysis activity"/>
    <property type="evidence" value="ECO:0000318"/>
    <property type="project" value="GO_Central"/>
</dbReference>
<dbReference type="GO" id="GO:0140662">
    <property type="term" value="F:ATP-dependent protein folding chaperone"/>
    <property type="evidence" value="ECO:0007669"/>
    <property type="project" value="InterPro"/>
</dbReference>
<dbReference type="GO" id="GO:0046983">
    <property type="term" value="F:protein dimerization activity"/>
    <property type="evidence" value="ECO:0007669"/>
    <property type="project" value="InterPro"/>
</dbReference>
<dbReference type="GO" id="GO:0051082">
    <property type="term" value="F:unfolded protein binding"/>
    <property type="evidence" value="ECO:0007669"/>
    <property type="project" value="UniProtKB-UniRule"/>
</dbReference>
<dbReference type="GO" id="GO:0008270">
    <property type="term" value="F:zinc ion binding"/>
    <property type="evidence" value="ECO:0007669"/>
    <property type="project" value="InterPro"/>
</dbReference>
<dbReference type="GO" id="GO:0051301">
    <property type="term" value="P:cell division"/>
    <property type="evidence" value="ECO:0000318"/>
    <property type="project" value="GO_Central"/>
</dbReference>
<dbReference type="GO" id="GO:0051603">
    <property type="term" value="P:proteolysis involved in protein catabolic process"/>
    <property type="evidence" value="ECO:0000318"/>
    <property type="project" value="GO_Central"/>
</dbReference>
<dbReference type="CDD" id="cd19497">
    <property type="entry name" value="RecA-like_ClpX"/>
    <property type="match status" value="1"/>
</dbReference>
<dbReference type="FunFam" id="1.10.8.60:FF:000002">
    <property type="entry name" value="ATP-dependent Clp protease ATP-binding subunit ClpX"/>
    <property type="match status" value="1"/>
</dbReference>
<dbReference type="FunFam" id="3.40.50.300:FF:000005">
    <property type="entry name" value="ATP-dependent Clp protease ATP-binding subunit ClpX"/>
    <property type="match status" value="1"/>
</dbReference>
<dbReference type="Gene3D" id="1.10.8.60">
    <property type="match status" value="1"/>
</dbReference>
<dbReference type="Gene3D" id="6.20.220.10">
    <property type="entry name" value="ClpX chaperone, C4-type zinc finger domain"/>
    <property type="match status" value="1"/>
</dbReference>
<dbReference type="Gene3D" id="3.40.50.300">
    <property type="entry name" value="P-loop containing nucleotide triphosphate hydrolases"/>
    <property type="match status" value="1"/>
</dbReference>
<dbReference type="HAMAP" id="MF_00175">
    <property type="entry name" value="ClpX"/>
    <property type="match status" value="1"/>
</dbReference>
<dbReference type="InterPro" id="IPR003593">
    <property type="entry name" value="AAA+_ATPase"/>
</dbReference>
<dbReference type="InterPro" id="IPR050052">
    <property type="entry name" value="ATP-dep_Clp_protease_ClpX"/>
</dbReference>
<dbReference type="InterPro" id="IPR003959">
    <property type="entry name" value="ATPase_AAA_core"/>
</dbReference>
<dbReference type="InterPro" id="IPR019489">
    <property type="entry name" value="Clp_ATPase_C"/>
</dbReference>
<dbReference type="InterPro" id="IPR004487">
    <property type="entry name" value="Clp_protease_ATP-bd_su_ClpX"/>
</dbReference>
<dbReference type="InterPro" id="IPR046425">
    <property type="entry name" value="ClpX_bact"/>
</dbReference>
<dbReference type="InterPro" id="IPR027417">
    <property type="entry name" value="P-loop_NTPase"/>
</dbReference>
<dbReference type="InterPro" id="IPR010603">
    <property type="entry name" value="Znf_CppX_C4"/>
</dbReference>
<dbReference type="InterPro" id="IPR038366">
    <property type="entry name" value="Znf_CppX_C4_sf"/>
</dbReference>
<dbReference type="NCBIfam" id="TIGR00382">
    <property type="entry name" value="clpX"/>
    <property type="match status" value="1"/>
</dbReference>
<dbReference type="NCBIfam" id="NF003745">
    <property type="entry name" value="PRK05342.1"/>
    <property type="match status" value="1"/>
</dbReference>
<dbReference type="PANTHER" id="PTHR48102:SF7">
    <property type="entry name" value="ATP-DEPENDENT CLP PROTEASE ATP-BINDING SUBUNIT CLPX-LIKE, MITOCHONDRIAL"/>
    <property type="match status" value="1"/>
</dbReference>
<dbReference type="PANTHER" id="PTHR48102">
    <property type="entry name" value="ATP-DEPENDENT CLP PROTEASE ATP-BINDING SUBUNIT CLPX-LIKE, MITOCHONDRIAL-RELATED"/>
    <property type="match status" value="1"/>
</dbReference>
<dbReference type="Pfam" id="PF07724">
    <property type="entry name" value="AAA_2"/>
    <property type="match status" value="1"/>
</dbReference>
<dbReference type="Pfam" id="PF10431">
    <property type="entry name" value="ClpB_D2-small"/>
    <property type="match status" value="1"/>
</dbReference>
<dbReference type="Pfam" id="PF06689">
    <property type="entry name" value="zf-C4_ClpX"/>
    <property type="match status" value="1"/>
</dbReference>
<dbReference type="SMART" id="SM00382">
    <property type="entry name" value="AAA"/>
    <property type="match status" value="1"/>
</dbReference>
<dbReference type="SMART" id="SM01086">
    <property type="entry name" value="ClpB_D2-small"/>
    <property type="match status" value="1"/>
</dbReference>
<dbReference type="SMART" id="SM00994">
    <property type="entry name" value="zf-C4_ClpX"/>
    <property type="match status" value="1"/>
</dbReference>
<dbReference type="SUPFAM" id="SSF57716">
    <property type="entry name" value="Glucocorticoid receptor-like (DNA-binding domain)"/>
    <property type="match status" value="1"/>
</dbReference>
<dbReference type="SUPFAM" id="SSF52540">
    <property type="entry name" value="P-loop containing nucleoside triphosphate hydrolases"/>
    <property type="match status" value="1"/>
</dbReference>
<dbReference type="PROSITE" id="PS51902">
    <property type="entry name" value="CLPX_ZB"/>
    <property type="match status" value="1"/>
</dbReference>
<accession>Q8ZC66</accession>
<accession>Q0WCC7</accession>
<organism>
    <name type="scientific">Yersinia pestis</name>
    <dbReference type="NCBI Taxonomy" id="632"/>
    <lineage>
        <taxon>Bacteria</taxon>
        <taxon>Pseudomonadati</taxon>
        <taxon>Pseudomonadota</taxon>
        <taxon>Gammaproteobacteria</taxon>
        <taxon>Enterobacterales</taxon>
        <taxon>Yersiniaceae</taxon>
        <taxon>Yersinia</taxon>
    </lineage>
</organism>
<feature type="chain" id="PRO_0000160464" description="ATP-dependent Clp protease ATP-binding subunit ClpX">
    <location>
        <begin position="1"/>
        <end position="423"/>
    </location>
</feature>
<feature type="domain" description="ClpX-type ZB" evidence="2">
    <location>
        <begin position="2"/>
        <end position="56"/>
    </location>
</feature>
<feature type="binding site" evidence="2">
    <location>
        <position position="15"/>
    </location>
    <ligand>
        <name>Zn(2+)</name>
        <dbReference type="ChEBI" id="CHEBI:29105"/>
    </ligand>
</feature>
<feature type="binding site" evidence="2">
    <location>
        <position position="18"/>
    </location>
    <ligand>
        <name>Zn(2+)</name>
        <dbReference type="ChEBI" id="CHEBI:29105"/>
    </ligand>
</feature>
<feature type="binding site" evidence="2">
    <location>
        <position position="37"/>
    </location>
    <ligand>
        <name>Zn(2+)</name>
        <dbReference type="ChEBI" id="CHEBI:29105"/>
    </ligand>
</feature>
<feature type="binding site" evidence="2">
    <location>
        <position position="40"/>
    </location>
    <ligand>
        <name>Zn(2+)</name>
        <dbReference type="ChEBI" id="CHEBI:29105"/>
    </ligand>
</feature>
<feature type="binding site" evidence="1">
    <location>
        <begin position="120"/>
        <end position="127"/>
    </location>
    <ligand>
        <name>ATP</name>
        <dbReference type="ChEBI" id="CHEBI:30616"/>
    </ligand>
</feature>